<comment type="function">
    <text evidence="1">Part of the ABC transporter complex PotABCD involved in spermidine/putrescine import. Responsible for energy coupling to the transport system.</text>
</comment>
<comment type="catalytic activity">
    <reaction evidence="1">
        <text>ATP + H2O + polyamine-[polyamine-binding protein]Side 1 = ADP + phosphate + polyamineSide 2 + [polyamine-binding protein]Side 1.</text>
        <dbReference type="EC" id="7.6.2.11"/>
    </reaction>
</comment>
<comment type="subunit">
    <text evidence="1">The complex is composed of two ATP-binding proteins (PotA), two transmembrane proteins (PotB and PotC) and a solute-binding protein (PotD).</text>
</comment>
<comment type="subcellular location">
    <subcellularLocation>
        <location evidence="1">Cell inner membrane</location>
        <topology evidence="1">Peripheral membrane protein</topology>
    </subcellularLocation>
</comment>
<comment type="similarity">
    <text evidence="1">Belongs to the ABC transporter superfamily. Spermidine/putrescine importer (TC 3.A.1.11.1) family.</text>
</comment>
<gene>
    <name evidence="1" type="primary">potA</name>
    <name type="ordered locus">PBPRA1852</name>
</gene>
<feature type="chain" id="PRO_0000092359" description="Spermidine/putrescine import ATP-binding protein PotA">
    <location>
        <begin position="1"/>
        <end position="372"/>
    </location>
</feature>
<feature type="domain" description="ABC transporter" evidence="1">
    <location>
        <begin position="12"/>
        <end position="242"/>
    </location>
</feature>
<feature type="binding site" evidence="1">
    <location>
        <begin position="44"/>
        <end position="51"/>
    </location>
    <ligand>
        <name>ATP</name>
        <dbReference type="ChEBI" id="CHEBI:30616"/>
    </ligand>
</feature>
<proteinExistence type="inferred from homology"/>
<reference key="1">
    <citation type="journal article" date="2005" name="Science">
        <title>Life at depth: Photobacterium profundum genome sequence and expression analysis.</title>
        <authorList>
            <person name="Vezzi A."/>
            <person name="Campanaro S."/>
            <person name="D'Angelo M."/>
            <person name="Simonato F."/>
            <person name="Vitulo N."/>
            <person name="Lauro F.M."/>
            <person name="Cestaro A."/>
            <person name="Malacrida G."/>
            <person name="Simionati B."/>
            <person name="Cannata N."/>
            <person name="Romualdi C."/>
            <person name="Bartlett D.H."/>
            <person name="Valle G."/>
        </authorList>
    </citation>
    <scope>NUCLEOTIDE SEQUENCE [LARGE SCALE GENOMIC DNA]</scope>
    <source>
        <strain>ATCC BAA-1253 / SS9</strain>
    </source>
</reference>
<evidence type="ECO:0000255" key="1">
    <source>
        <dbReference type="HAMAP-Rule" id="MF_01726"/>
    </source>
</evidence>
<organism>
    <name type="scientific">Photobacterium profundum (strain SS9)</name>
    <dbReference type="NCBI Taxonomy" id="298386"/>
    <lineage>
        <taxon>Bacteria</taxon>
        <taxon>Pseudomonadati</taxon>
        <taxon>Pseudomonadota</taxon>
        <taxon>Gammaproteobacteria</taxon>
        <taxon>Vibrionales</taxon>
        <taxon>Vibrionaceae</taxon>
        <taxon>Photobacterium</taxon>
    </lineage>
</organism>
<keyword id="KW-0067">ATP-binding</keyword>
<keyword id="KW-0997">Cell inner membrane</keyword>
<keyword id="KW-1003">Cell membrane</keyword>
<keyword id="KW-0472">Membrane</keyword>
<keyword id="KW-0547">Nucleotide-binding</keyword>
<keyword id="KW-1185">Reference proteome</keyword>
<keyword id="KW-1278">Translocase</keyword>
<keyword id="KW-0813">Transport</keyword>
<sequence length="372" mass="41912">MNASTTSKKPVIQLKGLNKSFDGKQIIAGLDLNVNDGEFLTILGPSGCGKTTVLRLIAGFENSDAGQVIIANKDVTQVPAEQRHVNTVFQSYALFPHMTVFENVAFGLRMQKVSESEIEPRVMDALRMVQLDKFAPRKPHQLSGGQQQRVAIARAVVNKPKVLLLDESLSALDYKLRKQMQLELKQLQRKLGITFIFVTHDQEEALSMSDRIIVMRDGNIEQDGSPREIYEEPTNLFVARFIGEINVFDATVKERLDEKRIMAEVEGRTAQIHCELAVKTGDKLKVLLRPEDIRLEEINNDEHAKGIIGYVRERTYKGMTLDSVIELESGMSVMVSEFFNEDDPDVDHSLNQKVAVTWVESWEVVLADEQEA</sequence>
<protein>
    <recommendedName>
        <fullName evidence="1">Spermidine/putrescine import ATP-binding protein PotA</fullName>
        <ecNumber evidence="1">7.6.2.11</ecNumber>
    </recommendedName>
</protein>
<name>POTA_PHOPR</name>
<dbReference type="EC" id="7.6.2.11" evidence="1"/>
<dbReference type="EMBL" id="CR378669">
    <property type="protein sequence ID" value="CAG20256.1"/>
    <property type="molecule type" value="Genomic_DNA"/>
</dbReference>
<dbReference type="RefSeq" id="WP_011218562.1">
    <property type="nucleotide sequence ID" value="NC_006370.1"/>
</dbReference>
<dbReference type="SMR" id="Q6LR20"/>
<dbReference type="STRING" id="298386.PBPRA1852"/>
<dbReference type="KEGG" id="ppr:PBPRA1852"/>
<dbReference type="eggNOG" id="COG3842">
    <property type="taxonomic scope" value="Bacteria"/>
</dbReference>
<dbReference type="HOGENOM" id="CLU_000604_1_1_6"/>
<dbReference type="Proteomes" id="UP000000593">
    <property type="component" value="Chromosome 1"/>
</dbReference>
<dbReference type="GO" id="GO:0043190">
    <property type="term" value="C:ATP-binding cassette (ABC) transporter complex"/>
    <property type="evidence" value="ECO:0007669"/>
    <property type="project" value="InterPro"/>
</dbReference>
<dbReference type="GO" id="GO:0015594">
    <property type="term" value="F:ABC-type putrescine transporter activity"/>
    <property type="evidence" value="ECO:0007669"/>
    <property type="project" value="InterPro"/>
</dbReference>
<dbReference type="GO" id="GO:0005524">
    <property type="term" value="F:ATP binding"/>
    <property type="evidence" value="ECO:0007669"/>
    <property type="project" value="UniProtKB-KW"/>
</dbReference>
<dbReference type="GO" id="GO:0016887">
    <property type="term" value="F:ATP hydrolysis activity"/>
    <property type="evidence" value="ECO:0007669"/>
    <property type="project" value="InterPro"/>
</dbReference>
<dbReference type="CDD" id="cd03300">
    <property type="entry name" value="ABC_PotA_N"/>
    <property type="match status" value="1"/>
</dbReference>
<dbReference type="FunFam" id="3.40.50.300:FF:000133">
    <property type="entry name" value="Spermidine/putrescine import ATP-binding protein PotA"/>
    <property type="match status" value="1"/>
</dbReference>
<dbReference type="Gene3D" id="2.40.50.100">
    <property type="match status" value="1"/>
</dbReference>
<dbReference type="Gene3D" id="3.40.50.300">
    <property type="entry name" value="P-loop containing nucleotide triphosphate hydrolases"/>
    <property type="match status" value="1"/>
</dbReference>
<dbReference type="InterPro" id="IPR003593">
    <property type="entry name" value="AAA+_ATPase"/>
</dbReference>
<dbReference type="InterPro" id="IPR050093">
    <property type="entry name" value="ABC_SmlMolc_Importer"/>
</dbReference>
<dbReference type="InterPro" id="IPR003439">
    <property type="entry name" value="ABC_transporter-like_ATP-bd"/>
</dbReference>
<dbReference type="InterPro" id="IPR017871">
    <property type="entry name" value="ABC_transporter-like_CS"/>
</dbReference>
<dbReference type="InterPro" id="IPR008995">
    <property type="entry name" value="Mo/tungstate-bd_C_term_dom"/>
</dbReference>
<dbReference type="InterPro" id="IPR027417">
    <property type="entry name" value="P-loop_NTPase"/>
</dbReference>
<dbReference type="InterPro" id="IPR005893">
    <property type="entry name" value="PotA-like"/>
</dbReference>
<dbReference type="InterPro" id="IPR017879">
    <property type="entry name" value="PotA_ATP-bd"/>
</dbReference>
<dbReference type="InterPro" id="IPR013611">
    <property type="entry name" value="Transp-assoc_OB_typ2"/>
</dbReference>
<dbReference type="NCBIfam" id="TIGR01187">
    <property type="entry name" value="potA"/>
    <property type="match status" value="1"/>
</dbReference>
<dbReference type="NCBIfam" id="NF006987">
    <property type="entry name" value="PRK09452.1"/>
    <property type="match status" value="1"/>
</dbReference>
<dbReference type="PANTHER" id="PTHR42781">
    <property type="entry name" value="SPERMIDINE/PUTRESCINE IMPORT ATP-BINDING PROTEIN POTA"/>
    <property type="match status" value="1"/>
</dbReference>
<dbReference type="PANTHER" id="PTHR42781:SF4">
    <property type="entry name" value="SPERMIDINE_PUTRESCINE IMPORT ATP-BINDING PROTEIN POTA"/>
    <property type="match status" value="1"/>
</dbReference>
<dbReference type="Pfam" id="PF00005">
    <property type="entry name" value="ABC_tran"/>
    <property type="match status" value="1"/>
</dbReference>
<dbReference type="Pfam" id="PF08402">
    <property type="entry name" value="TOBE_2"/>
    <property type="match status" value="1"/>
</dbReference>
<dbReference type="SMART" id="SM00382">
    <property type="entry name" value="AAA"/>
    <property type="match status" value="1"/>
</dbReference>
<dbReference type="SUPFAM" id="SSF50331">
    <property type="entry name" value="MOP-like"/>
    <property type="match status" value="1"/>
</dbReference>
<dbReference type="SUPFAM" id="SSF52540">
    <property type="entry name" value="P-loop containing nucleoside triphosphate hydrolases"/>
    <property type="match status" value="1"/>
</dbReference>
<dbReference type="PROSITE" id="PS00211">
    <property type="entry name" value="ABC_TRANSPORTER_1"/>
    <property type="match status" value="1"/>
</dbReference>
<dbReference type="PROSITE" id="PS50893">
    <property type="entry name" value="ABC_TRANSPORTER_2"/>
    <property type="match status" value="1"/>
</dbReference>
<dbReference type="PROSITE" id="PS51305">
    <property type="entry name" value="POTA"/>
    <property type="match status" value="1"/>
</dbReference>
<accession>Q6LR20</accession>